<reference key="1">
    <citation type="journal article" date="2002" name="Nature">
        <title>Genome sequence of the plant pathogen Ralstonia solanacearum.</title>
        <authorList>
            <person name="Salanoubat M."/>
            <person name="Genin S."/>
            <person name="Artiguenave F."/>
            <person name="Gouzy J."/>
            <person name="Mangenot S."/>
            <person name="Arlat M."/>
            <person name="Billault A."/>
            <person name="Brottier P."/>
            <person name="Camus J.-C."/>
            <person name="Cattolico L."/>
            <person name="Chandler M."/>
            <person name="Choisne N."/>
            <person name="Claudel-Renard C."/>
            <person name="Cunnac S."/>
            <person name="Demange N."/>
            <person name="Gaspin C."/>
            <person name="Lavie M."/>
            <person name="Moisan A."/>
            <person name="Robert C."/>
            <person name="Saurin W."/>
            <person name="Schiex T."/>
            <person name="Siguier P."/>
            <person name="Thebault P."/>
            <person name="Whalen M."/>
            <person name="Wincker P."/>
            <person name="Levy M."/>
            <person name="Weissenbach J."/>
            <person name="Boucher C.A."/>
        </authorList>
    </citation>
    <scope>NUCLEOTIDE SEQUENCE [LARGE SCALE GENOMIC DNA]</scope>
    <source>
        <strain>ATCC BAA-1114 / GMI1000</strain>
    </source>
</reference>
<accession>Q8Y019</accession>
<proteinExistence type="inferred from homology"/>
<protein>
    <recommendedName>
        <fullName evidence="1">Adenylosuccinate synthetase</fullName>
        <shortName evidence="1">AMPSase</shortName>
        <shortName evidence="1">AdSS</shortName>
        <ecNumber evidence="1">6.3.4.4</ecNumber>
    </recommendedName>
    <alternativeName>
        <fullName evidence="1">IMP--aspartate ligase</fullName>
    </alternativeName>
</protein>
<keyword id="KW-0963">Cytoplasm</keyword>
<keyword id="KW-0342">GTP-binding</keyword>
<keyword id="KW-0436">Ligase</keyword>
<keyword id="KW-0460">Magnesium</keyword>
<keyword id="KW-0479">Metal-binding</keyword>
<keyword id="KW-0547">Nucleotide-binding</keyword>
<keyword id="KW-0658">Purine biosynthesis</keyword>
<keyword id="KW-1185">Reference proteome</keyword>
<organism>
    <name type="scientific">Ralstonia nicotianae (strain ATCC BAA-1114 / GMI1000)</name>
    <name type="common">Ralstonia solanacearum</name>
    <dbReference type="NCBI Taxonomy" id="267608"/>
    <lineage>
        <taxon>Bacteria</taxon>
        <taxon>Pseudomonadati</taxon>
        <taxon>Pseudomonadota</taxon>
        <taxon>Betaproteobacteria</taxon>
        <taxon>Burkholderiales</taxon>
        <taxon>Burkholderiaceae</taxon>
        <taxon>Ralstonia</taxon>
        <taxon>Ralstonia solanacearum species complex</taxon>
    </lineage>
</organism>
<dbReference type="EC" id="6.3.4.4" evidence="1"/>
<dbReference type="EMBL" id="AL646052">
    <property type="protein sequence ID" value="CAD14928.1"/>
    <property type="molecule type" value="Genomic_DNA"/>
</dbReference>
<dbReference type="RefSeq" id="WP_011001175.1">
    <property type="nucleotide sequence ID" value="NC_003295.1"/>
</dbReference>
<dbReference type="SMR" id="Q8Y019"/>
<dbReference type="STRING" id="267608.RSc1226"/>
<dbReference type="EnsemblBacteria" id="CAD14928">
    <property type="protein sequence ID" value="CAD14928"/>
    <property type="gene ID" value="RSc1226"/>
</dbReference>
<dbReference type="KEGG" id="rso:RSc1226"/>
<dbReference type="eggNOG" id="COG0104">
    <property type="taxonomic scope" value="Bacteria"/>
</dbReference>
<dbReference type="HOGENOM" id="CLU_029848_0_0_4"/>
<dbReference type="UniPathway" id="UPA00075">
    <property type="reaction ID" value="UER00335"/>
</dbReference>
<dbReference type="Proteomes" id="UP000001436">
    <property type="component" value="Chromosome"/>
</dbReference>
<dbReference type="GO" id="GO:0005737">
    <property type="term" value="C:cytoplasm"/>
    <property type="evidence" value="ECO:0007669"/>
    <property type="project" value="UniProtKB-SubCell"/>
</dbReference>
<dbReference type="GO" id="GO:0004019">
    <property type="term" value="F:adenylosuccinate synthase activity"/>
    <property type="evidence" value="ECO:0007669"/>
    <property type="project" value="UniProtKB-UniRule"/>
</dbReference>
<dbReference type="GO" id="GO:0005525">
    <property type="term" value="F:GTP binding"/>
    <property type="evidence" value="ECO:0007669"/>
    <property type="project" value="UniProtKB-UniRule"/>
</dbReference>
<dbReference type="GO" id="GO:0000287">
    <property type="term" value="F:magnesium ion binding"/>
    <property type="evidence" value="ECO:0007669"/>
    <property type="project" value="UniProtKB-UniRule"/>
</dbReference>
<dbReference type="GO" id="GO:0044208">
    <property type="term" value="P:'de novo' AMP biosynthetic process"/>
    <property type="evidence" value="ECO:0007669"/>
    <property type="project" value="UniProtKB-UniRule"/>
</dbReference>
<dbReference type="GO" id="GO:0046040">
    <property type="term" value="P:IMP metabolic process"/>
    <property type="evidence" value="ECO:0007669"/>
    <property type="project" value="TreeGrafter"/>
</dbReference>
<dbReference type="CDD" id="cd03108">
    <property type="entry name" value="AdSS"/>
    <property type="match status" value="1"/>
</dbReference>
<dbReference type="FunFam" id="1.10.300.10:FF:000001">
    <property type="entry name" value="Adenylosuccinate synthetase"/>
    <property type="match status" value="1"/>
</dbReference>
<dbReference type="FunFam" id="3.90.170.10:FF:000001">
    <property type="entry name" value="Adenylosuccinate synthetase"/>
    <property type="match status" value="1"/>
</dbReference>
<dbReference type="Gene3D" id="3.40.440.10">
    <property type="entry name" value="Adenylosuccinate Synthetase, subunit A, domain 1"/>
    <property type="match status" value="1"/>
</dbReference>
<dbReference type="Gene3D" id="1.10.300.10">
    <property type="entry name" value="Adenylosuccinate Synthetase, subunit A, domain 2"/>
    <property type="match status" value="1"/>
</dbReference>
<dbReference type="Gene3D" id="3.90.170.10">
    <property type="entry name" value="Adenylosuccinate Synthetase, subunit A, domain 3"/>
    <property type="match status" value="1"/>
</dbReference>
<dbReference type="HAMAP" id="MF_00011">
    <property type="entry name" value="Adenylosucc_synth"/>
    <property type="match status" value="1"/>
</dbReference>
<dbReference type="InterPro" id="IPR018220">
    <property type="entry name" value="Adenylosuccin_syn_GTP-bd"/>
</dbReference>
<dbReference type="InterPro" id="IPR033128">
    <property type="entry name" value="Adenylosuccin_syn_Lys_AS"/>
</dbReference>
<dbReference type="InterPro" id="IPR042109">
    <property type="entry name" value="Adenylosuccinate_synth_dom1"/>
</dbReference>
<dbReference type="InterPro" id="IPR042110">
    <property type="entry name" value="Adenylosuccinate_synth_dom2"/>
</dbReference>
<dbReference type="InterPro" id="IPR042111">
    <property type="entry name" value="Adenylosuccinate_synth_dom3"/>
</dbReference>
<dbReference type="InterPro" id="IPR001114">
    <property type="entry name" value="Adenylosuccinate_synthetase"/>
</dbReference>
<dbReference type="InterPro" id="IPR027417">
    <property type="entry name" value="P-loop_NTPase"/>
</dbReference>
<dbReference type="NCBIfam" id="NF002223">
    <property type="entry name" value="PRK01117.1"/>
    <property type="match status" value="1"/>
</dbReference>
<dbReference type="NCBIfam" id="TIGR00184">
    <property type="entry name" value="purA"/>
    <property type="match status" value="1"/>
</dbReference>
<dbReference type="PANTHER" id="PTHR11846">
    <property type="entry name" value="ADENYLOSUCCINATE SYNTHETASE"/>
    <property type="match status" value="1"/>
</dbReference>
<dbReference type="PANTHER" id="PTHR11846:SF0">
    <property type="entry name" value="ADENYLOSUCCINATE SYNTHETASE"/>
    <property type="match status" value="1"/>
</dbReference>
<dbReference type="Pfam" id="PF00709">
    <property type="entry name" value="Adenylsucc_synt"/>
    <property type="match status" value="1"/>
</dbReference>
<dbReference type="SMART" id="SM00788">
    <property type="entry name" value="Adenylsucc_synt"/>
    <property type="match status" value="1"/>
</dbReference>
<dbReference type="SUPFAM" id="SSF52540">
    <property type="entry name" value="P-loop containing nucleoside triphosphate hydrolases"/>
    <property type="match status" value="1"/>
</dbReference>
<dbReference type="PROSITE" id="PS01266">
    <property type="entry name" value="ADENYLOSUCCIN_SYN_1"/>
    <property type="match status" value="1"/>
</dbReference>
<dbReference type="PROSITE" id="PS00513">
    <property type="entry name" value="ADENYLOSUCCIN_SYN_2"/>
    <property type="match status" value="1"/>
</dbReference>
<comment type="function">
    <text evidence="1">Plays an important role in the de novo pathway of purine nucleotide biosynthesis. Catalyzes the first committed step in the biosynthesis of AMP from IMP.</text>
</comment>
<comment type="catalytic activity">
    <reaction evidence="1">
        <text>IMP + L-aspartate + GTP = N(6)-(1,2-dicarboxyethyl)-AMP + GDP + phosphate + 2 H(+)</text>
        <dbReference type="Rhea" id="RHEA:15753"/>
        <dbReference type="ChEBI" id="CHEBI:15378"/>
        <dbReference type="ChEBI" id="CHEBI:29991"/>
        <dbReference type="ChEBI" id="CHEBI:37565"/>
        <dbReference type="ChEBI" id="CHEBI:43474"/>
        <dbReference type="ChEBI" id="CHEBI:57567"/>
        <dbReference type="ChEBI" id="CHEBI:58053"/>
        <dbReference type="ChEBI" id="CHEBI:58189"/>
        <dbReference type="EC" id="6.3.4.4"/>
    </reaction>
</comment>
<comment type="cofactor">
    <cofactor evidence="1">
        <name>Mg(2+)</name>
        <dbReference type="ChEBI" id="CHEBI:18420"/>
    </cofactor>
    <text evidence="1">Binds 1 Mg(2+) ion per subunit.</text>
</comment>
<comment type="pathway">
    <text evidence="1">Purine metabolism; AMP biosynthesis via de novo pathway; AMP from IMP: step 1/2.</text>
</comment>
<comment type="subunit">
    <text evidence="1">Homodimer.</text>
</comment>
<comment type="subcellular location">
    <subcellularLocation>
        <location evidence="1">Cytoplasm</location>
    </subcellularLocation>
</comment>
<comment type="similarity">
    <text evidence="1">Belongs to the adenylosuccinate synthetase family.</text>
</comment>
<evidence type="ECO:0000255" key="1">
    <source>
        <dbReference type="HAMAP-Rule" id="MF_00011"/>
    </source>
</evidence>
<gene>
    <name evidence="1" type="primary">purA</name>
    <name type="ordered locus">RSc1226</name>
    <name type="ORF">RS02733</name>
</gene>
<sequence length="446" mass="48265">MSAPAVSQGRNVVVIGTQWGDEGKGKIVDWLTDHAQGVVRFQGGHNAGHTLIIGGKKTILRLIPSGIMRDGVACYIGNGVVLSPEALFKEIDELESAGVEVKSRLRISEATTLILPYHIAIDKAREIKRGAAKIGTTGRGIGPAYEDKVARRALRVQDLFDPAYFAERLRENLDFHNFVLTQYLNHPALDFQQTLDEMLPYGERLAPMVTDVSAELFAANAAGKNLMFEGAQGTLLDIDHGTYPFVTSSNCVAGNAAAGAGVGPGQLHYILGITKAYCTRVGSGPFPSELYDADNPARQDPTGVRLANVGKEFGSVTGRPRRTGWLDAAALRRAIQINGVSGLCMTKLDVLDGLETIKLCVGYMLDGKSIDILPRGSDAVARCQPVYEEFPGWNTSTFGLKEWDALPETAQAYLKRVEEVAGIPIAMISTGPDRDETILLRHPYKD</sequence>
<name>PURA_RALN1</name>
<feature type="chain" id="PRO_0000095217" description="Adenylosuccinate synthetase">
    <location>
        <begin position="1"/>
        <end position="446"/>
    </location>
</feature>
<feature type="active site" description="Proton acceptor" evidence="1">
    <location>
        <position position="21"/>
    </location>
</feature>
<feature type="active site" description="Proton donor" evidence="1">
    <location>
        <position position="49"/>
    </location>
</feature>
<feature type="binding site" evidence="1">
    <location>
        <begin position="20"/>
        <end position="26"/>
    </location>
    <ligand>
        <name>GTP</name>
        <dbReference type="ChEBI" id="CHEBI:37565"/>
    </ligand>
</feature>
<feature type="binding site" description="in other chain" evidence="1">
    <location>
        <begin position="21"/>
        <end position="24"/>
    </location>
    <ligand>
        <name>IMP</name>
        <dbReference type="ChEBI" id="CHEBI:58053"/>
        <note>ligand shared between dimeric partners</note>
    </ligand>
</feature>
<feature type="binding site" evidence="1">
    <location>
        <position position="21"/>
    </location>
    <ligand>
        <name>Mg(2+)</name>
        <dbReference type="ChEBI" id="CHEBI:18420"/>
    </ligand>
</feature>
<feature type="binding site" description="in other chain" evidence="1">
    <location>
        <begin position="46"/>
        <end position="49"/>
    </location>
    <ligand>
        <name>IMP</name>
        <dbReference type="ChEBI" id="CHEBI:58053"/>
        <note>ligand shared between dimeric partners</note>
    </ligand>
</feature>
<feature type="binding site" evidence="1">
    <location>
        <begin position="48"/>
        <end position="50"/>
    </location>
    <ligand>
        <name>GTP</name>
        <dbReference type="ChEBI" id="CHEBI:37565"/>
    </ligand>
</feature>
<feature type="binding site" evidence="1">
    <location>
        <position position="48"/>
    </location>
    <ligand>
        <name>Mg(2+)</name>
        <dbReference type="ChEBI" id="CHEBI:18420"/>
    </ligand>
</feature>
<feature type="binding site" description="in other chain" evidence="1">
    <location>
        <position position="137"/>
    </location>
    <ligand>
        <name>IMP</name>
        <dbReference type="ChEBI" id="CHEBI:58053"/>
        <note>ligand shared between dimeric partners</note>
    </ligand>
</feature>
<feature type="binding site" evidence="1">
    <location>
        <position position="151"/>
    </location>
    <ligand>
        <name>IMP</name>
        <dbReference type="ChEBI" id="CHEBI:58053"/>
        <note>ligand shared between dimeric partners</note>
    </ligand>
</feature>
<feature type="binding site" description="in other chain" evidence="1">
    <location>
        <position position="232"/>
    </location>
    <ligand>
        <name>IMP</name>
        <dbReference type="ChEBI" id="CHEBI:58053"/>
        <note>ligand shared between dimeric partners</note>
    </ligand>
</feature>
<feature type="binding site" description="in other chain" evidence="1">
    <location>
        <position position="247"/>
    </location>
    <ligand>
        <name>IMP</name>
        <dbReference type="ChEBI" id="CHEBI:58053"/>
        <note>ligand shared between dimeric partners</note>
    </ligand>
</feature>
<feature type="binding site" evidence="1">
    <location>
        <begin position="315"/>
        <end position="321"/>
    </location>
    <ligand>
        <name>substrate</name>
    </ligand>
</feature>
<feature type="binding site" description="in other chain" evidence="1">
    <location>
        <position position="319"/>
    </location>
    <ligand>
        <name>IMP</name>
        <dbReference type="ChEBI" id="CHEBI:58053"/>
        <note>ligand shared between dimeric partners</note>
    </ligand>
</feature>
<feature type="binding site" evidence="1">
    <location>
        <position position="321"/>
    </location>
    <ligand>
        <name>GTP</name>
        <dbReference type="ChEBI" id="CHEBI:37565"/>
    </ligand>
</feature>
<feature type="binding site" evidence="1">
    <location>
        <begin position="347"/>
        <end position="349"/>
    </location>
    <ligand>
        <name>GTP</name>
        <dbReference type="ChEBI" id="CHEBI:37565"/>
    </ligand>
</feature>
<feature type="binding site" evidence="1">
    <location>
        <begin position="429"/>
        <end position="431"/>
    </location>
    <ligand>
        <name>GTP</name>
        <dbReference type="ChEBI" id="CHEBI:37565"/>
    </ligand>
</feature>